<organism>
    <name type="scientific">Arabidopsis thaliana</name>
    <name type="common">Mouse-ear cress</name>
    <dbReference type="NCBI Taxonomy" id="3702"/>
    <lineage>
        <taxon>Eukaryota</taxon>
        <taxon>Viridiplantae</taxon>
        <taxon>Streptophyta</taxon>
        <taxon>Embryophyta</taxon>
        <taxon>Tracheophyta</taxon>
        <taxon>Spermatophyta</taxon>
        <taxon>Magnoliopsida</taxon>
        <taxon>eudicotyledons</taxon>
        <taxon>Gunneridae</taxon>
        <taxon>Pentapetalae</taxon>
        <taxon>rosids</taxon>
        <taxon>malvids</taxon>
        <taxon>Brassicales</taxon>
        <taxon>Brassicaceae</taxon>
        <taxon>Camelineae</taxon>
        <taxon>Arabidopsis</taxon>
    </lineage>
</organism>
<protein>
    <recommendedName>
        <fullName evidence="2">Peptide encoded by miPEP165a</fullName>
    </recommendedName>
</protein>
<feature type="peptide" id="PRO_0000433199" description="Peptide encoded by miPEP165a">
    <location>
        <begin position="1"/>
        <end position="18"/>
    </location>
</feature>
<reference key="1">
    <citation type="journal article" date="2015" name="Nature">
        <title>Primary transcripts of microRNAs encode regulatory peptides.</title>
        <authorList>
            <person name="Lauressergues D."/>
            <person name="Couzigou J.M."/>
            <person name="Clemente H.S."/>
            <person name="Martinez Y."/>
            <person name="Dunand C."/>
            <person name="Becard G."/>
            <person name="Combier J.P."/>
        </authorList>
    </citation>
    <scope>NUCLEOTIDE SEQUENCE [MRNA]</scope>
    <scope>FUNCTION</scope>
    <scope>TISSUE SPECIFICITY</scope>
    <source>
        <strain>cv. Columbia</strain>
    </source>
</reference>
<reference key="2">
    <citation type="journal article" date="2000" name="Nature">
        <title>Sequence and analysis of chromosome 1 of the plant Arabidopsis thaliana.</title>
        <authorList>
            <person name="Theologis A."/>
            <person name="Ecker J.R."/>
            <person name="Palm C.J."/>
            <person name="Federspiel N.A."/>
            <person name="Kaul S."/>
            <person name="White O."/>
            <person name="Alonso J."/>
            <person name="Altafi H."/>
            <person name="Araujo R."/>
            <person name="Bowman C.L."/>
            <person name="Brooks S.Y."/>
            <person name="Buehler E."/>
            <person name="Chan A."/>
            <person name="Chao Q."/>
            <person name="Chen H."/>
            <person name="Cheuk R.F."/>
            <person name="Chin C.W."/>
            <person name="Chung M.K."/>
            <person name="Conn L."/>
            <person name="Conway A.B."/>
            <person name="Conway A.R."/>
            <person name="Creasy T.H."/>
            <person name="Dewar K."/>
            <person name="Dunn P."/>
            <person name="Etgu P."/>
            <person name="Feldblyum T.V."/>
            <person name="Feng J.-D."/>
            <person name="Fong B."/>
            <person name="Fujii C.Y."/>
            <person name="Gill J.E."/>
            <person name="Goldsmith A.D."/>
            <person name="Haas B."/>
            <person name="Hansen N.F."/>
            <person name="Hughes B."/>
            <person name="Huizar L."/>
            <person name="Hunter J.L."/>
            <person name="Jenkins J."/>
            <person name="Johnson-Hopson C."/>
            <person name="Khan S."/>
            <person name="Khaykin E."/>
            <person name="Kim C.J."/>
            <person name="Koo H.L."/>
            <person name="Kremenetskaia I."/>
            <person name="Kurtz D.B."/>
            <person name="Kwan A."/>
            <person name="Lam B."/>
            <person name="Langin-Hooper S."/>
            <person name="Lee A."/>
            <person name="Lee J.M."/>
            <person name="Lenz C.A."/>
            <person name="Li J.H."/>
            <person name="Li Y.-P."/>
            <person name="Lin X."/>
            <person name="Liu S.X."/>
            <person name="Liu Z.A."/>
            <person name="Luros J.S."/>
            <person name="Maiti R."/>
            <person name="Marziali A."/>
            <person name="Militscher J."/>
            <person name="Miranda M."/>
            <person name="Nguyen M."/>
            <person name="Nierman W.C."/>
            <person name="Osborne B.I."/>
            <person name="Pai G."/>
            <person name="Peterson J."/>
            <person name="Pham P.K."/>
            <person name="Rizzo M."/>
            <person name="Rooney T."/>
            <person name="Rowley D."/>
            <person name="Sakano H."/>
            <person name="Salzberg S.L."/>
            <person name="Schwartz J.R."/>
            <person name="Shinn P."/>
            <person name="Southwick A.M."/>
            <person name="Sun H."/>
            <person name="Tallon L.J."/>
            <person name="Tambunga G."/>
            <person name="Toriumi M.J."/>
            <person name="Town C.D."/>
            <person name="Utterback T."/>
            <person name="Van Aken S."/>
            <person name="Vaysberg M."/>
            <person name="Vysotskaia V.S."/>
            <person name="Walker M."/>
            <person name="Wu D."/>
            <person name="Yu G."/>
            <person name="Fraser C.M."/>
            <person name="Venter J.C."/>
            <person name="Davis R.W."/>
        </authorList>
    </citation>
    <scope>NUCLEOTIDE SEQUENCE [LARGE SCALE GENOMIC DNA]</scope>
    <source>
        <strain>cv. Columbia</strain>
    </source>
</reference>
<reference key="3">
    <citation type="journal article" date="2017" name="Plant J.">
        <title>Araport11: a complete reannotation of the Arabidopsis thaliana reference genome.</title>
        <authorList>
            <person name="Cheng C.Y."/>
            <person name="Krishnakumar V."/>
            <person name="Chan A.P."/>
            <person name="Thibaud-Nissen F."/>
            <person name="Schobel S."/>
            <person name="Town C.D."/>
        </authorList>
    </citation>
    <scope>GENOME REANNOTATION</scope>
    <source>
        <strain>cv. Columbia</strain>
    </source>
</reference>
<name>P165A_ARATH</name>
<keyword id="KW-0010">Activator</keyword>
<keyword id="KW-1185">Reference proteome</keyword>
<keyword id="KW-0804">Transcription</keyword>
<keyword id="KW-0805">Transcription regulation</keyword>
<proteinExistence type="evidence at transcript level"/>
<evidence type="ECO:0000269" key="1">
    <source>
    </source>
</evidence>
<evidence type="ECO:0000303" key="2">
    <source>
    </source>
</evidence>
<evidence type="ECO:0000305" key="3"/>
<evidence type="ECO:0000312" key="4">
    <source>
        <dbReference type="EMBL" id="AC023628"/>
    </source>
</evidence>
<accession>P0DKI9</accession>
<dbReference type="EMBL" id="AC023628">
    <property type="status" value="NOT_ANNOTATED_CDS"/>
    <property type="molecule type" value="Genomic_DNA"/>
</dbReference>
<dbReference type="EMBL" id="CP002684">
    <property type="status" value="NOT_ANNOTATED_CDS"/>
    <property type="molecule type" value="Genomic_DNA"/>
</dbReference>
<dbReference type="STRING" id="3702.P0DKI9"/>
<dbReference type="Araport" id="AT1G01184"/>
<dbReference type="TAIR" id="AT1G01184"/>
<dbReference type="InParanoid" id="P0DKI9"/>
<dbReference type="PRO" id="PR:P0DKI9"/>
<dbReference type="Proteomes" id="UP000006548">
    <property type="component" value="Chromosome 1"/>
</dbReference>
<dbReference type="GO" id="GO:1902895">
    <property type="term" value="P:positive regulation of miRNA transcription"/>
    <property type="evidence" value="ECO:0000314"/>
    <property type="project" value="GO_Central"/>
</dbReference>
<dbReference type="GO" id="GO:2000280">
    <property type="term" value="P:regulation of root development"/>
    <property type="evidence" value="ECO:0000314"/>
    <property type="project" value="UniProtKB"/>
</dbReference>
<gene>
    <name evidence="2" type="primary">miPEP165a</name>
    <name evidence="3" type="ordered locus">At1g01184</name>
    <name evidence="4" type="ORF">F6F3</name>
</gene>
<comment type="function">
    <text evidence="1">Regulatory peptide encoded by the primary transcript (pri-miR165a) of the microRNA miR165a that enhances the accumulation of its corresponding mature miRNA. Acts as a transcriptional activator of its corresponding pri-miRNA. Addition of synthetic miPEP165a increases the abundance of miR165a, with consequent increase of root length.</text>
</comment>
<comment type="tissue specificity">
    <text evidence="1">Expressed in the root endodermis.</text>
</comment>
<sequence>MRVKLFQLRGMLSGSRIL</sequence>